<accession>Q8F0T5</accession>
<reference key="1">
    <citation type="journal article" date="2003" name="Nature">
        <title>Unique physiological and pathogenic features of Leptospira interrogans revealed by whole-genome sequencing.</title>
        <authorList>
            <person name="Ren S.-X."/>
            <person name="Fu G."/>
            <person name="Jiang X.-G."/>
            <person name="Zeng R."/>
            <person name="Miao Y.-G."/>
            <person name="Xu H."/>
            <person name="Zhang Y.-X."/>
            <person name="Xiong H."/>
            <person name="Lu G."/>
            <person name="Lu L.-F."/>
            <person name="Jiang H.-Q."/>
            <person name="Jia J."/>
            <person name="Tu Y.-F."/>
            <person name="Jiang J.-X."/>
            <person name="Gu W.-Y."/>
            <person name="Zhang Y.-Q."/>
            <person name="Cai Z."/>
            <person name="Sheng H.-H."/>
            <person name="Yin H.-F."/>
            <person name="Zhang Y."/>
            <person name="Zhu G.-F."/>
            <person name="Wan M."/>
            <person name="Huang H.-L."/>
            <person name="Qian Z."/>
            <person name="Wang S.-Y."/>
            <person name="Ma W."/>
            <person name="Yao Z.-J."/>
            <person name="Shen Y."/>
            <person name="Qiang B.-Q."/>
            <person name="Xia Q.-C."/>
            <person name="Guo X.-K."/>
            <person name="Danchin A."/>
            <person name="Saint Girons I."/>
            <person name="Somerville R.L."/>
            <person name="Wen Y.-M."/>
            <person name="Shi M.-H."/>
            <person name="Chen Z."/>
            <person name="Xu J.-G."/>
            <person name="Zhao G.-P."/>
        </authorList>
    </citation>
    <scope>NUCLEOTIDE SEQUENCE [LARGE SCALE GENOMIC DNA]</scope>
    <source>
        <strain>56601</strain>
    </source>
</reference>
<gene>
    <name type="ordered locus">LA_3406</name>
</gene>
<organism>
    <name type="scientific">Leptospira interrogans serogroup Icterohaemorrhagiae serovar Lai (strain 56601)</name>
    <dbReference type="NCBI Taxonomy" id="189518"/>
    <lineage>
        <taxon>Bacteria</taxon>
        <taxon>Pseudomonadati</taxon>
        <taxon>Spirochaetota</taxon>
        <taxon>Spirochaetia</taxon>
        <taxon>Leptospirales</taxon>
        <taxon>Leptospiraceae</taxon>
        <taxon>Leptospira</taxon>
    </lineage>
</organism>
<dbReference type="EMBL" id="AE010300">
    <property type="protein sequence ID" value="AAN50604.1"/>
    <property type="molecule type" value="Genomic_DNA"/>
</dbReference>
<dbReference type="RefSeq" id="NP_713586.1">
    <property type="nucleotide sequence ID" value="NC_004342.2"/>
</dbReference>
<dbReference type="RefSeq" id="WP_001283275.1">
    <property type="nucleotide sequence ID" value="NC_004342.2"/>
</dbReference>
<dbReference type="SMR" id="Q8F0T5"/>
<dbReference type="FunCoup" id="Q8F0T5">
    <property type="interactions" value="276"/>
</dbReference>
<dbReference type="STRING" id="189518.LA_3406"/>
<dbReference type="PaxDb" id="189518-LA_3406"/>
<dbReference type="EnsemblBacteria" id="AAN50604">
    <property type="protein sequence ID" value="AAN50604"/>
    <property type="gene ID" value="LA_3406"/>
</dbReference>
<dbReference type="KEGG" id="lil:LA_3406"/>
<dbReference type="PATRIC" id="fig|189518.3.peg.3373"/>
<dbReference type="HOGENOM" id="CLU_099839_1_0_12"/>
<dbReference type="InParanoid" id="Q8F0T5"/>
<dbReference type="OrthoDB" id="9801447at2"/>
<dbReference type="Proteomes" id="UP000001408">
    <property type="component" value="Chromosome I"/>
</dbReference>
<dbReference type="GO" id="GO:0005829">
    <property type="term" value="C:cytosol"/>
    <property type="evidence" value="ECO:0000318"/>
    <property type="project" value="GO_Central"/>
</dbReference>
<dbReference type="GO" id="GO:0000166">
    <property type="term" value="F:nucleotide binding"/>
    <property type="evidence" value="ECO:0000318"/>
    <property type="project" value="GO_Central"/>
</dbReference>
<dbReference type="CDD" id="cd11740">
    <property type="entry name" value="YajQ_like"/>
    <property type="match status" value="1"/>
</dbReference>
<dbReference type="FunFam" id="3.30.70.990:FF:000002">
    <property type="entry name" value="UPF0234 protein LEP1GSC067_4943"/>
    <property type="match status" value="1"/>
</dbReference>
<dbReference type="Gene3D" id="3.30.70.860">
    <property type="match status" value="1"/>
</dbReference>
<dbReference type="Gene3D" id="3.30.70.990">
    <property type="entry name" value="YajQ-like, domain 2"/>
    <property type="match status" value="1"/>
</dbReference>
<dbReference type="HAMAP" id="MF_00632">
    <property type="entry name" value="YajQ"/>
    <property type="match status" value="1"/>
</dbReference>
<dbReference type="InterPro" id="IPR007551">
    <property type="entry name" value="DUF520"/>
</dbReference>
<dbReference type="InterPro" id="IPR035571">
    <property type="entry name" value="UPF0234-like_C"/>
</dbReference>
<dbReference type="InterPro" id="IPR035570">
    <property type="entry name" value="UPF0234_N"/>
</dbReference>
<dbReference type="InterPro" id="IPR036183">
    <property type="entry name" value="YajQ-like_sf"/>
</dbReference>
<dbReference type="NCBIfam" id="NF003819">
    <property type="entry name" value="PRK05412.1"/>
    <property type="match status" value="1"/>
</dbReference>
<dbReference type="PANTHER" id="PTHR30476">
    <property type="entry name" value="UPF0234 PROTEIN YAJQ"/>
    <property type="match status" value="1"/>
</dbReference>
<dbReference type="PANTHER" id="PTHR30476:SF0">
    <property type="entry name" value="UPF0234 PROTEIN YAJQ"/>
    <property type="match status" value="1"/>
</dbReference>
<dbReference type="Pfam" id="PF04461">
    <property type="entry name" value="DUF520"/>
    <property type="match status" value="1"/>
</dbReference>
<dbReference type="SUPFAM" id="SSF89963">
    <property type="entry name" value="YajQ-like"/>
    <property type="match status" value="2"/>
</dbReference>
<protein>
    <recommendedName>
        <fullName evidence="1">Nucleotide-binding protein LA_3406</fullName>
    </recommendedName>
</protein>
<name>Y3406_LEPIN</name>
<feature type="chain" id="PRO_0000106187" description="Nucleotide-binding protein LA_3406">
    <location>
        <begin position="1"/>
        <end position="163"/>
    </location>
</feature>
<keyword id="KW-0547">Nucleotide-binding</keyword>
<keyword id="KW-1185">Reference proteome</keyword>
<sequence length="163" mass="18364">MSDPSFDVVSEISRPELTNAVTQALGEIKNRFDFKGSKSDIQLEDEQLVLTSDNEAKLESVIDVLVSKMAKRGLGLKNFDFKSKIEPATGGTVRMKVKIRKGMEKEQTKEVTRIVKESKLKVNATIMGECVRITGKKKDDLQEVIHLLKNSDLPFDVQFTNYK</sequence>
<evidence type="ECO:0000255" key="1">
    <source>
        <dbReference type="HAMAP-Rule" id="MF_00632"/>
    </source>
</evidence>
<proteinExistence type="inferred from homology"/>
<comment type="function">
    <text evidence="1">Nucleotide-binding protein.</text>
</comment>
<comment type="similarity">
    <text evidence="1">Belongs to the YajQ family.</text>
</comment>